<comment type="function">
    <text evidence="3">Component of intercellular bridges during meiosis. Intercellular bridges are evolutionarily conserved structures that connect differentiating germ cells. Not required for fertility.</text>
</comment>
<comment type="subunit">
    <text evidence="3">Homodimer. Interacts with TEX14.</text>
</comment>
<comment type="subcellular location">
    <subcellularLocation>
        <location evidence="3">Cytoplasm</location>
    </subcellularLocation>
    <text>Detected in the intercellular bridges. Localization to intercellular bridges is identified in all stages of tubules but dynamically increases from stage I pachytene spermatocytes to stage XII secondary spermatocytes and disappears after the formation of step 1 round spermatids (stage I). In addition, it is localized in the cytoplasm in pachytene spermatocytes to secondary spermatocytes. The cytoplasmic signal increases dramatically in stages X-XII, decreases from step 1 to step 3 spermatids, and disappears in step 4 spermatids.</text>
</comment>
<comment type="tissue specificity">
    <text evidence="3">Highly expressed in testis. Also expressed in other tissues at lower level.</text>
</comment>
<comment type="developmental stage">
    <text evidence="3">Present in testes beginning at postnatal day 5 (at protein level).</text>
</comment>
<comment type="disruption phenotype">
    <text evidence="3">No visible phenotype. Null male mice produce an increased number of sperm and show enhanced fertility.</text>
</comment>
<reference key="1">
    <citation type="journal article" date="2005" name="Science">
        <title>The transcriptional landscape of the mammalian genome.</title>
        <authorList>
            <person name="Carninci P."/>
            <person name="Kasukawa T."/>
            <person name="Katayama S."/>
            <person name="Gough J."/>
            <person name="Frith M.C."/>
            <person name="Maeda N."/>
            <person name="Oyama R."/>
            <person name="Ravasi T."/>
            <person name="Lenhard B."/>
            <person name="Wells C."/>
            <person name="Kodzius R."/>
            <person name="Shimokawa K."/>
            <person name="Bajic V.B."/>
            <person name="Brenner S.E."/>
            <person name="Batalov S."/>
            <person name="Forrest A.R."/>
            <person name="Zavolan M."/>
            <person name="Davis M.J."/>
            <person name="Wilming L.G."/>
            <person name="Aidinis V."/>
            <person name="Allen J.E."/>
            <person name="Ambesi-Impiombato A."/>
            <person name="Apweiler R."/>
            <person name="Aturaliya R.N."/>
            <person name="Bailey T.L."/>
            <person name="Bansal M."/>
            <person name="Baxter L."/>
            <person name="Beisel K.W."/>
            <person name="Bersano T."/>
            <person name="Bono H."/>
            <person name="Chalk A.M."/>
            <person name="Chiu K.P."/>
            <person name="Choudhary V."/>
            <person name="Christoffels A."/>
            <person name="Clutterbuck D.R."/>
            <person name="Crowe M.L."/>
            <person name="Dalla E."/>
            <person name="Dalrymple B.P."/>
            <person name="de Bono B."/>
            <person name="Della Gatta G."/>
            <person name="di Bernardo D."/>
            <person name="Down T."/>
            <person name="Engstrom P."/>
            <person name="Fagiolini M."/>
            <person name="Faulkner G."/>
            <person name="Fletcher C.F."/>
            <person name="Fukushima T."/>
            <person name="Furuno M."/>
            <person name="Futaki S."/>
            <person name="Gariboldi M."/>
            <person name="Georgii-Hemming P."/>
            <person name="Gingeras T.R."/>
            <person name="Gojobori T."/>
            <person name="Green R.E."/>
            <person name="Gustincich S."/>
            <person name="Harbers M."/>
            <person name="Hayashi Y."/>
            <person name="Hensch T.K."/>
            <person name="Hirokawa N."/>
            <person name="Hill D."/>
            <person name="Huminiecki L."/>
            <person name="Iacono M."/>
            <person name="Ikeo K."/>
            <person name="Iwama A."/>
            <person name="Ishikawa T."/>
            <person name="Jakt M."/>
            <person name="Kanapin A."/>
            <person name="Katoh M."/>
            <person name="Kawasawa Y."/>
            <person name="Kelso J."/>
            <person name="Kitamura H."/>
            <person name="Kitano H."/>
            <person name="Kollias G."/>
            <person name="Krishnan S.P."/>
            <person name="Kruger A."/>
            <person name="Kummerfeld S.K."/>
            <person name="Kurochkin I.V."/>
            <person name="Lareau L.F."/>
            <person name="Lazarevic D."/>
            <person name="Lipovich L."/>
            <person name="Liu J."/>
            <person name="Liuni S."/>
            <person name="McWilliam S."/>
            <person name="Madan Babu M."/>
            <person name="Madera M."/>
            <person name="Marchionni L."/>
            <person name="Matsuda H."/>
            <person name="Matsuzawa S."/>
            <person name="Miki H."/>
            <person name="Mignone F."/>
            <person name="Miyake S."/>
            <person name="Morris K."/>
            <person name="Mottagui-Tabar S."/>
            <person name="Mulder N."/>
            <person name="Nakano N."/>
            <person name="Nakauchi H."/>
            <person name="Ng P."/>
            <person name="Nilsson R."/>
            <person name="Nishiguchi S."/>
            <person name="Nishikawa S."/>
            <person name="Nori F."/>
            <person name="Ohara O."/>
            <person name="Okazaki Y."/>
            <person name="Orlando V."/>
            <person name="Pang K.C."/>
            <person name="Pavan W.J."/>
            <person name="Pavesi G."/>
            <person name="Pesole G."/>
            <person name="Petrovsky N."/>
            <person name="Piazza S."/>
            <person name="Reed J."/>
            <person name="Reid J.F."/>
            <person name="Ring B.Z."/>
            <person name="Ringwald M."/>
            <person name="Rost B."/>
            <person name="Ruan Y."/>
            <person name="Salzberg S.L."/>
            <person name="Sandelin A."/>
            <person name="Schneider C."/>
            <person name="Schoenbach C."/>
            <person name="Sekiguchi K."/>
            <person name="Semple C.A."/>
            <person name="Seno S."/>
            <person name="Sessa L."/>
            <person name="Sheng Y."/>
            <person name="Shibata Y."/>
            <person name="Shimada H."/>
            <person name="Shimada K."/>
            <person name="Silva D."/>
            <person name="Sinclair B."/>
            <person name="Sperling S."/>
            <person name="Stupka E."/>
            <person name="Sugiura K."/>
            <person name="Sultana R."/>
            <person name="Takenaka Y."/>
            <person name="Taki K."/>
            <person name="Tammoja K."/>
            <person name="Tan S.L."/>
            <person name="Tang S."/>
            <person name="Taylor M.S."/>
            <person name="Tegner J."/>
            <person name="Teichmann S.A."/>
            <person name="Ueda H.R."/>
            <person name="van Nimwegen E."/>
            <person name="Verardo R."/>
            <person name="Wei C.L."/>
            <person name="Yagi K."/>
            <person name="Yamanishi H."/>
            <person name="Zabarovsky E."/>
            <person name="Zhu S."/>
            <person name="Zimmer A."/>
            <person name="Hide W."/>
            <person name="Bult C."/>
            <person name="Grimmond S.M."/>
            <person name="Teasdale R.D."/>
            <person name="Liu E.T."/>
            <person name="Brusic V."/>
            <person name="Quackenbush J."/>
            <person name="Wahlestedt C."/>
            <person name="Mattick J.S."/>
            <person name="Hume D.A."/>
            <person name="Kai C."/>
            <person name="Sasaki D."/>
            <person name="Tomaru Y."/>
            <person name="Fukuda S."/>
            <person name="Kanamori-Katayama M."/>
            <person name="Suzuki M."/>
            <person name="Aoki J."/>
            <person name="Arakawa T."/>
            <person name="Iida J."/>
            <person name="Imamura K."/>
            <person name="Itoh M."/>
            <person name="Kato T."/>
            <person name="Kawaji H."/>
            <person name="Kawagashira N."/>
            <person name="Kawashima T."/>
            <person name="Kojima M."/>
            <person name="Kondo S."/>
            <person name="Konno H."/>
            <person name="Nakano K."/>
            <person name="Ninomiya N."/>
            <person name="Nishio T."/>
            <person name="Okada M."/>
            <person name="Plessy C."/>
            <person name="Shibata K."/>
            <person name="Shiraki T."/>
            <person name="Suzuki S."/>
            <person name="Tagami M."/>
            <person name="Waki K."/>
            <person name="Watahiki A."/>
            <person name="Okamura-Oho Y."/>
            <person name="Suzuki H."/>
            <person name="Kawai J."/>
            <person name="Hayashizaki Y."/>
        </authorList>
    </citation>
    <scope>NUCLEOTIDE SEQUENCE [LARGE SCALE MRNA]</scope>
    <source>
        <strain>C57BL/6J</strain>
        <tissue>Testis</tissue>
    </source>
</reference>
<reference key="2">
    <citation type="journal article" date="2010" name="Cell">
        <title>A tissue-specific atlas of mouse protein phosphorylation and expression.</title>
        <authorList>
            <person name="Huttlin E.L."/>
            <person name="Jedrychowski M.P."/>
            <person name="Elias J.E."/>
            <person name="Goswami T."/>
            <person name="Rad R."/>
            <person name="Beausoleil S.A."/>
            <person name="Villen J."/>
            <person name="Haas W."/>
            <person name="Sowa M.E."/>
            <person name="Gygi S.P."/>
        </authorList>
    </citation>
    <scope>PHOSPHORYLATION [LARGE SCALE ANALYSIS] AT SER-365; SER-368; SER-510; SER-681 AND SER-688</scope>
    <scope>IDENTIFICATION BY MASS SPECTROMETRY [LARGE SCALE ANALYSIS]</scope>
    <source>
        <tissue>Testis</tissue>
    </source>
</reference>
<reference key="3">
    <citation type="journal article" date="2011" name="PLoS ONE">
        <title>Identification and characterization of RBM44 as a novel intercellular bridge protein.</title>
        <authorList>
            <person name="Iwamori T."/>
            <person name="Lin Y.N."/>
            <person name="Ma L."/>
            <person name="Iwamori N."/>
            <person name="Matzuk M.M."/>
        </authorList>
    </citation>
    <scope>FUNCTION</scope>
    <scope>SUBCELLULAR LOCATION</scope>
    <scope>SUBUNIT</scope>
    <scope>TISSUE SPECIFICITY</scope>
    <scope>DEVELOPMENTAL STAGE</scope>
    <scope>INTERACTION WITH TEX14</scope>
    <scope>DISRUPTION PHENOTYPE</scope>
</reference>
<gene>
    <name type="primary">Rbm44</name>
    <name type="synonym">Gm817</name>
</gene>
<sequence>MQATAALETDSDKNYPKNGGHFQNDKLYNPKKENMFFSNGCNGVILAFPDGKEDSLATEERASDKENSIVDQRDLSELSFSENQDSNRGNIFSQSSEFEDSNDYAFLNETYSIHYSESKLKDENLLHLYSGLHPEVHKRVEMIFDTLDNNSIGLGRSAEASGADCGDVQKSDVDEDSQQEYHSAELECISAHLAKTVSRSSLDVSELKTSSYDFKCGGNFEDNHGKLESGPSPSLESLNGFAQECSLQVSTSQSSDMLQEYHEPKYEKCKEQEVDLTYHKAFDGILQRSSSPLNHQKVPETQVYTKEVKSQTTESKDFYGNRIFQNKALQRPENATMFPQDRALETHLKANDAHQPSGPCALDDSVISLCGSSQYKSLPEPGFFSPVIPRVAVTDYQAEVEGSCLHHVQGSATNKACSLMKEVCLTSVPDAAACIAAVQQTLHVSSRVNASSSIVSASSITETKMVRQSQAEEWQSDKRSVACNTAWSCGQQCRDAQRAAPGSDSGRPLSTGCLKPSGNSLNENSLELRKVFDTTDRQKHCNRAFQLCEEKAVPSRCCQKTTERAIKAEMHLLDVCYQMCHRHCHHIYKLVMESRAGLNRNLQTDSAKKELGAALLSVLEDLKLRYMNLKGKVHKGIPLEELPPLSVESKLLSAFSDFVSRLMKDEACSLSGANSELDNQSLPDVDVSPGLLKTLSQMSFIPDSSQPEQGKSPMSDVCKNGDTDIGFNCLKLNDKECKTVQEASEDWFDATERLIGADFSETQDSTAECEEWQPRNPLELKNSELHGKGQGFLIHVGGLCPSVSEADLRSHFQKYQVSEISIYDSTNYRYASLAFAKNSNAKMAVKEMNGVKINGKSVTVRLVKIPGEYTPPPLSTTGNSTSMNHLEKNTNKDATSASSICRLPRAKSRQLESEQDSEFPPLDQGVKKNCNQMKSGQLLPETPFQFIPPNTLNLRSFTKIMKRLAELHPDISRDHIIEALQEVRINHKGFLNGLSINTIVKMASSFLRNSALK</sequence>
<dbReference type="EMBL" id="AK133355">
    <property type="protein sequence ID" value="BAE21615.1"/>
    <property type="molecule type" value="mRNA"/>
</dbReference>
<dbReference type="CCDS" id="CCDS15157.1"/>
<dbReference type="RefSeq" id="NP_001028580.1">
    <property type="nucleotide sequence ID" value="NM_001033408.5"/>
</dbReference>
<dbReference type="RefSeq" id="XP_006529765.1">
    <property type="nucleotide sequence ID" value="XM_006529702.1"/>
</dbReference>
<dbReference type="SMR" id="Q3V089"/>
<dbReference type="BioGRID" id="236724">
    <property type="interactions" value="1"/>
</dbReference>
<dbReference type="FunCoup" id="Q3V089">
    <property type="interactions" value="248"/>
</dbReference>
<dbReference type="IntAct" id="Q3V089">
    <property type="interactions" value="1"/>
</dbReference>
<dbReference type="STRING" id="10090.ENSMUSP00000092286"/>
<dbReference type="GlyGen" id="Q3V089">
    <property type="glycosylation" value="1 site, 1 O-linked glycan (1 site)"/>
</dbReference>
<dbReference type="iPTMnet" id="Q3V089"/>
<dbReference type="PhosphoSitePlus" id="Q3V089"/>
<dbReference type="PaxDb" id="10090-ENSMUSP00000092286"/>
<dbReference type="ProteomicsDB" id="300322"/>
<dbReference type="Antibodypedia" id="1145">
    <property type="antibodies" value="8 antibodies from 7 providers"/>
</dbReference>
<dbReference type="Ensembl" id="ENSMUST00000094698.2">
    <property type="protein sequence ID" value="ENSMUSP00000092286.2"/>
    <property type="gene ID" value="ENSMUSG00000070732.3"/>
</dbReference>
<dbReference type="GeneID" id="329207"/>
<dbReference type="KEGG" id="mmu:329207"/>
<dbReference type="UCSC" id="uc007bzv.1">
    <property type="organism name" value="mouse"/>
</dbReference>
<dbReference type="AGR" id="MGI:2685663"/>
<dbReference type="CTD" id="375316"/>
<dbReference type="MGI" id="MGI:2685663">
    <property type="gene designation" value="Rbm44"/>
</dbReference>
<dbReference type="VEuPathDB" id="HostDB:ENSMUSG00000070732"/>
<dbReference type="eggNOG" id="ENOG502S2NU">
    <property type="taxonomic scope" value="Eukaryota"/>
</dbReference>
<dbReference type="GeneTree" id="ENSGT00390000016508"/>
<dbReference type="HOGENOM" id="CLU_010942_0_0_1"/>
<dbReference type="InParanoid" id="Q3V089"/>
<dbReference type="OMA" id="EVRINHK"/>
<dbReference type="OrthoDB" id="9941526at2759"/>
<dbReference type="PhylomeDB" id="Q3V089"/>
<dbReference type="TreeFam" id="TF337508"/>
<dbReference type="BioGRID-ORCS" id="329207">
    <property type="hits" value="5 hits in 81 CRISPR screens"/>
</dbReference>
<dbReference type="ChiTaRS" id="Rbm44">
    <property type="organism name" value="mouse"/>
</dbReference>
<dbReference type="PRO" id="PR:Q3V089"/>
<dbReference type="Proteomes" id="UP000000589">
    <property type="component" value="Chromosome 1"/>
</dbReference>
<dbReference type="RNAct" id="Q3V089">
    <property type="molecule type" value="protein"/>
</dbReference>
<dbReference type="Bgee" id="ENSMUSG00000070732">
    <property type="expression patterns" value="Expressed in spermatocyte and 37 other cell types or tissues"/>
</dbReference>
<dbReference type="ExpressionAtlas" id="Q3V089">
    <property type="expression patterns" value="baseline and differential"/>
</dbReference>
<dbReference type="GO" id="GO:0005737">
    <property type="term" value="C:cytoplasm"/>
    <property type="evidence" value="ECO:0000314"/>
    <property type="project" value="UniProtKB"/>
</dbReference>
<dbReference type="GO" id="GO:0045171">
    <property type="term" value="C:intercellular bridge"/>
    <property type="evidence" value="ECO:0000314"/>
    <property type="project" value="UniProtKB"/>
</dbReference>
<dbReference type="GO" id="GO:0042803">
    <property type="term" value="F:protein homodimerization activity"/>
    <property type="evidence" value="ECO:0000314"/>
    <property type="project" value="UniProtKB"/>
</dbReference>
<dbReference type="GO" id="GO:0003723">
    <property type="term" value="F:RNA binding"/>
    <property type="evidence" value="ECO:0007669"/>
    <property type="project" value="UniProtKB-KW"/>
</dbReference>
<dbReference type="Gene3D" id="3.30.70.330">
    <property type="match status" value="1"/>
</dbReference>
<dbReference type="InterPro" id="IPR012677">
    <property type="entry name" value="Nucleotide-bd_a/b_plait_sf"/>
</dbReference>
<dbReference type="InterPro" id="IPR035979">
    <property type="entry name" value="RBD_domain_sf"/>
</dbReference>
<dbReference type="InterPro" id="IPR000504">
    <property type="entry name" value="RRM_dom"/>
</dbReference>
<dbReference type="InterPro" id="IPR056870">
    <property type="entry name" value="TTC3/DZIP3/RBM44-like_helical"/>
</dbReference>
<dbReference type="PANTHER" id="PTHR48026">
    <property type="entry name" value="HOMOLOGOUS TO DROSOPHILA SQD (SQUID) PROTEIN"/>
    <property type="match status" value="1"/>
</dbReference>
<dbReference type="PANTHER" id="PTHR48026:SF8">
    <property type="entry name" value="RNA-BINDING PROTEIN 44"/>
    <property type="match status" value="1"/>
</dbReference>
<dbReference type="Pfam" id="PF00076">
    <property type="entry name" value="RRM_1"/>
    <property type="match status" value="1"/>
</dbReference>
<dbReference type="Pfam" id="PF24905">
    <property type="entry name" value="TTC3_9th"/>
    <property type="match status" value="1"/>
</dbReference>
<dbReference type="SMART" id="SM00360">
    <property type="entry name" value="RRM"/>
    <property type="match status" value="1"/>
</dbReference>
<dbReference type="SUPFAM" id="SSF54928">
    <property type="entry name" value="RNA-binding domain, RBD"/>
    <property type="match status" value="1"/>
</dbReference>
<dbReference type="PROSITE" id="PS50102">
    <property type="entry name" value="RRM"/>
    <property type="match status" value="1"/>
</dbReference>
<accession>Q3V089</accession>
<protein>
    <recommendedName>
        <fullName>RNA-binding protein 44</fullName>
    </recommendedName>
    <alternativeName>
        <fullName>RNA-binding motif protein 44</fullName>
    </alternativeName>
</protein>
<name>RBM44_MOUSE</name>
<evidence type="ECO:0000255" key="1">
    <source>
        <dbReference type="PROSITE-ProRule" id="PRU00176"/>
    </source>
</evidence>
<evidence type="ECO:0000256" key="2">
    <source>
        <dbReference type="SAM" id="MobiDB-lite"/>
    </source>
</evidence>
<evidence type="ECO:0000269" key="3">
    <source>
    </source>
</evidence>
<evidence type="ECO:0007744" key="4">
    <source>
    </source>
</evidence>
<feature type="chain" id="PRO_0000294175" description="RNA-binding protein 44">
    <location>
        <begin position="1"/>
        <end position="1013"/>
    </location>
</feature>
<feature type="domain" description="RRM" evidence="1">
    <location>
        <begin position="792"/>
        <end position="865"/>
    </location>
</feature>
<feature type="region of interest" description="Disordered" evidence="2">
    <location>
        <begin position="1"/>
        <end position="25"/>
    </location>
</feature>
<feature type="region of interest" description="Disordered" evidence="2">
    <location>
        <begin position="56"/>
        <end position="94"/>
    </location>
</feature>
<feature type="region of interest" description="Disordered" evidence="2">
    <location>
        <begin position="905"/>
        <end position="925"/>
    </location>
</feature>
<feature type="compositionally biased region" description="Basic and acidic residues" evidence="2">
    <location>
        <begin position="56"/>
        <end position="76"/>
    </location>
</feature>
<feature type="compositionally biased region" description="Polar residues" evidence="2">
    <location>
        <begin position="78"/>
        <end position="94"/>
    </location>
</feature>
<feature type="modified residue" description="Phosphoserine" evidence="4">
    <location>
        <position position="365"/>
    </location>
</feature>
<feature type="modified residue" description="Phosphoserine" evidence="4">
    <location>
        <position position="368"/>
    </location>
</feature>
<feature type="modified residue" description="Phosphoserine" evidence="4">
    <location>
        <position position="510"/>
    </location>
</feature>
<feature type="modified residue" description="Phosphoserine" evidence="4">
    <location>
        <position position="681"/>
    </location>
</feature>
<feature type="modified residue" description="Phosphoserine" evidence="4">
    <location>
        <position position="688"/>
    </location>
</feature>
<organism>
    <name type="scientific">Mus musculus</name>
    <name type="common">Mouse</name>
    <dbReference type="NCBI Taxonomy" id="10090"/>
    <lineage>
        <taxon>Eukaryota</taxon>
        <taxon>Metazoa</taxon>
        <taxon>Chordata</taxon>
        <taxon>Craniata</taxon>
        <taxon>Vertebrata</taxon>
        <taxon>Euteleostomi</taxon>
        <taxon>Mammalia</taxon>
        <taxon>Eutheria</taxon>
        <taxon>Euarchontoglires</taxon>
        <taxon>Glires</taxon>
        <taxon>Rodentia</taxon>
        <taxon>Myomorpha</taxon>
        <taxon>Muroidea</taxon>
        <taxon>Muridae</taxon>
        <taxon>Murinae</taxon>
        <taxon>Mus</taxon>
        <taxon>Mus</taxon>
    </lineage>
</organism>
<proteinExistence type="evidence at protein level"/>
<keyword id="KW-0963">Cytoplasm</keyword>
<keyword id="KW-0597">Phosphoprotein</keyword>
<keyword id="KW-1185">Reference proteome</keyword>
<keyword id="KW-0694">RNA-binding</keyword>